<comment type="subcellular location">
    <subcellularLocation>
        <location evidence="1">Cell membrane</location>
        <topology evidence="1">Lipid-anchor</topology>
    </subcellularLocation>
</comment>
<comment type="similarity">
    <text evidence="1">Belongs to the LpqB lipoprotein family.</text>
</comment>
<gene>
    <name evidence="1" type="primary">lpqB</name>
    <name type="ordered locus">ROP_63870</name>
</gene>
<organism>
    <name type="scientific">Rhodococcus opacus (strain B4)</name>
    <dbReference type="NCBI Taxonomy" id="632772"/>
    <lineage>
        <taxon>Bacteria</taxon>
        <taxon>Bacillati</taxon>
        <taxon>Actinomycetota</taxon>
        <taxon>Actinomycetes</taxon>
        <taxon>Mycobacteriales</taxon>
        <taxon>Nocardiaceae</taxon>
        <taxon>Rhodococcus</taxon>
    </lineage>
</organism>
<keyword id="KW-1003">Cell membrane</keyword>
<keyword id="KW-0449">Lipoprotein</keyword>
<keyword id="KW-0472">Membrane</keyword>
<keyword id="KW-0564">Palmitate</keyword>
<keyword id="KW-0732">Signal</keyword>
<feature type="signal peptide" evidence="1">
    <location>
        <begin position="1"/>
        <end position="28"/>
    </location>
</feature>
<feature type="chain" id="PRO_1000184173" description="Lipoprotein LpqB">
    <location>
        <begin position="29"/>
        <end position="597"/>
    </location>
</feature>
<feature type="region of interest" description="Disordered" evidence="2">
    <location>
        <begin position="39"/>
        <end position="59"/>
    </location>
</feature>
<feature type="compositionally biased region" description="Polar residues" evidence="2">
    <location>
        <begin position="39"/>
        <end position="51"/>
    </location>
</feature>
<feature type="lipid moiety-binding region" description="N-palmitoyl cysteine" evidence="1">
    <location>
        <position position="29"/>
    </location>
</feature>
<feature type="lipid moiety-binding region" description="S-diacylglycerol cysteine" evidence="1">
    <location>
        <position position="29"/>
    </location>
</feature>
<name>LPQB_RHOOB</name>
<proteinExistence type="inferred from homology"/>
<reference key="1">
    <citation type="submission" date="2009-03" db="EMBL/GenBank/DDBJ databases">
        <title>Comparison of the complete genome sequences of Rhodococcus erythropolis PR4 and Rhodococcus opacus B4.</title>
        <authorList>
            <person name="Takarada H."/>
            <person name="Sekine M."/>
            <person name="Hosoyama A."/>
            <person name="Yamada R."/>
            <person name="Fujisawa T."/>
            <person name="Omata S."/>
            <person name="Shimizu A."/>
            <person name="Tsukatani N."/>
            <person name="Tanikawa S."/>
            <person name="Fujita N."/>
            <person name="Harayama S."/>
        </authorList>
    </citation>
    <scope>NUCLEOTIDE SEQUENCE [LARGE SCALE GENOMIC DNA]</scope>
    <source>
        <strain>B4</strain>
    </source>
</reference>
<evidence type="ECO:0000255" key="1">
    <source>
        <dbReference type="HAMAP-Rule" id="MF_01373"/>
    </source>
</evidence>
<evidence type="ECO:0000256" key="2">
    <source>
        <dbReference type="SAM" id="MobiDB-lite"/>
    </source>
</evidence>
<sequence>MTPGSRSAMRSRSVCGAIALAVLVTVSGCASLPDSSTPQAIGTINRDSPGSSVAAPAPGREPDLLLRDFFKASTDPTDRHLAARQFLTPGVSGRWDDAASATIVDKVDVLPETRSADQATYTIRANKVGQLEPGGLYVAEEGSFETRISLELQGGEWRISELPAGVILDRAQFLNTYQRKSLYFLDPAGTTVVPDPRWVSGAQDQMASQLIGLLIDGPKAALAPAVRNELGDGVSVRGPITKADGRTAQVGVGLGGIRIDFTGVPPMDAQQKQLFAAQVIWTLANAEISGPYVLLADGEPFDERFPNGWTTADVASMNPFATSSATVGLHALREGSMVSVTETGVTPVPGYFGAARNMRSLALSQDGKLVAAVADTGRPAPEPASSLMVGAYEDGAASVLEGGAITRPTWAPDNSAIWAAVNGNTVIRVLREPGTGRTSVVNVDAGAVTALGATITELRLSRDGVRAALIVDGKVYLAIVTQMPGGAYALTNPRAVAIGLGSPALSLDWSTSDTIVVARAASDIPVVQVAVDGSRMDALPSRNLTAPVVAVDASTTTEFVADSRAVFQLNNNDPAGDRYWREVPGLTGVKAIPVLPG</sequence>
<accession>C1B1D9</accession>
<protein>
    <recommendedName>
        <fullName evidence="1">Lipoprotein LpqB</fullName>
    </recommendedName>
</protein>
<dbReference type="EMBL" id="AP011115">
    <property type="protein sequence ID" value="BAH54634.1"/>
    <property type="molecule type" value="Genomic_DNA"/>
</dbReference>
<dbReference type="RefSeq" id="WP_015890089.1">
    <property type="nucleotide sequence ID" value="NC_012522.1"/>
</dbReference>
<dbReference type="SMR" id="C1B1D9"/>
<dbReference type="STRING" id="632772.ROP_63870"/>
<dbReference type="KEGG" id="rop:ROP_63870"/>
<dbReference type="PATRIC" id="fig|632772.20.peg.6669"/>
<dbReference type="HOGENOM" id="CLU_032207_1_0_11"/>
<dbReference type="OrthoDB" id="3226781at2"/>
<dbReference type="Proteomes" id="UP000002212">
    <property type="component" value="Chromosome"/>
</dbReference>
<dbReference type="GO" id="GO:0005886">
    <property type="term" value="C:plasma membrane"/>
    <property type="evidence" value="ECO:0007669"/>
    <property type="project" value="UniProtKB-SubCell"/>
</dbReference>
<dbReference type="HAMAP" id="MF_01373">
    <property type="entry name" value="LpqB_lipoprot"/>
    <property type="match status" value="1"/>
</dbReference>
<dbReference type="InterPro" id="IPR019606">
    <property type="entry name" value="GerMN"/>
</dbReference>
<dbReference type="InterPro" id="IPR023959">
    <property type="entry name" value="Lipoprotein_LpqB"/>
</dbReference>
<dbReference type="InterPro" id="IPR018910">
    <property type="entry name" value="Lipoprotein_LpqB_C"/>
</dbReference>
<dbReference type="NCBIfam" id="NF010141">
    <property type="entry name" value="PRK13616.1"/>
    <property type="match status" value="1"/>
</dbReference>
<dbReference type="Pfam" id="PF10646">
    <property type="entry name" value="Germane"/>
    <property type="match status" value="1"/>
</dbReference>
<dbReference type="Pfam" id="PF10647">
    <property type="entry name" value="Gmad1"/>
    <property type="match status" value="1"/>
</dbReference>
<dbReference type="SMART" id="SM00909">
    <property type="entry name" value="Germane"/>
    <property type="match status" value="1"/>
</dbReference>
<dbReference type="SUPFAM" id="SSF82171">
    <property type="entry name" value="DPP6 N-terminal domain-like"/>
    <property type="match status" value="1"/>
</dbReference>
<dbReference type="PROSITE" id="PS51257">
    <property type="entry name" value="PROKAR_LIPOPROTEIN"/>
    <property type="match status" value="1"/>
</dbReference>